<proteinExistence type="inferred from homology"/>
<organism>
    <name type="scientific">Salmonella newport (strain SL254)</name>
    <dbReference type="NCBI Taxonomy" id="423368"/>
    <lineage>
        <taxon>Bacteria</taxon>
        <taxon>Pseudomonadati</taxon>
        <taxon>Pseudomonadota</taxon>
        <taxon>Gammaproteobacteria</taxon>
        <taxon>Enterobacterales</taxon>
        <taxon>Enterobacteriaceae</taxon>
        <taxon>Salmonella</taxon>
    </lineage>
</organism>
<feature type="chain" id="PRO_1000200645" description="NAD(P)H dehydrogenase (quinone)">
    <location>
        <begin position="1"/>
        <end position="198"/>
    </location>
</feature>
<feature type="domain" description="Flavodoxin-like" evidence="1">
    <location>
        <begin position="4"/>
        <end position="189"/>
    </location>
</feature>
<feature type="binding site" evidence="1">
    <location>
        <begin position="10"/>
        <end position="15"/>
    </location>
    <ligand>
        <name>FMN</name>
        <dbReference type="ChEBI" id="CHEBI:58210"/>
    </ligand>
</feature>
<feature type="binding site" evidence="1">
    <location>
        <position position="12"/>
    </location>
    <ligand>
        <name>NAD(+)</name>
        <dbReference type="ChEBI" id="CHEBI:57540"/>
    </ligand>
</feature>
<feature type="binding site" evidence="1">
    <location>
        <begin position="78"/>
        <end position="80"/>
    </location>
    <ligand>
        <name>FMN</name>
        <dbReference type="ChEBI" id="CHEBI:58210"/>
    </ligand>
</feature>
<feature type="binding site" evidence="1">
    <location>
        <position position="98"/>
    </location>
    <ligand>
        <name>substrate</name>
    </ligand>
</feature>
<feature type="binding site" evidence="1">
    <location>
        <begin position="113"/>
        <end position="118"/>
    </location>
    <ligand>
        <name>FMN</name>
        <dbReference type="ChEBI" id="CHEBI:58210"/>
    </ligand>
</feature>
<feature type="binding site" evidence="1">
    <location>
        <position position="133"/>
    </location>
    <ligand>
        <name>FMN</name>
        <dbReference type="ChEBI" id="CHEBI:58210"/>
    </ligand>
</feature>
<dbReference type="EC" id="1.6.5.2" evidence="1"/>
<dbReference type="EMBL" id="CP001113">
    <property type="protein sequence ID" value="ACF62655.1"/>
    <property type="molecule type" value="Genomic_DNA"/>
</dbReference>
<dbReference type="SMR" id="B4T2V2"/>
<dbReference type="KEGG" id="see:SNSL254_A1214"/>
<dbReference type="HOGENOM" id="CLU_051402_0_2_6"/>
<dbReference type="Proteomes" id="UP000008824">
    <property type="component" value="Chromosome"/>
</dbReference>
<dbReference type="GO" id="GO:0016020">
    <property type="term" value="C:membrane"/>
    <property type="evidence" value="ECO:0007669"/>
    <property type="project" value="TreeGrafter"/>
</dbReference>
<dbReference type="GO" id="GO:0050660">
    <property type="term" value="F:flavin adenine dinucleotide binding"/>
    <property type="evidence" value="ECO:0007669"/>
    <property type="project" value="UniProtKB-UniRule"/>
</dbReference>
<dbReference type="GO" id="GO:0010181">
    <property type="term" value="F:FMN binding"/>
    <property type="evidence" value="ECO:0007669"/>
    <property type="project" value="InterPro"/>
</dbReference>
<dbReference type="GO" id="GO:0051287">
    <property type="term" value="F:NAD binding"/>
    <property type="evidence" value="ECO:0007669"/>
    <property type="project" value="UniProtKB-UniRule"/>
</dbReference>
<dbReference type="GO" id="GO:0050136">
    <property type="term" value="F:NADH:ubiquinone reductase (non-electrogenic) activity"/>
    <property type="evidence" value="ECO:0007669"/>
    <property type="project" value="RHEA"/>
</dbReference>
<dbReference type="GO" id="GO:0050661">
    <property type="term" value="F:NADP binding"/>
    <property type="evidence" value="ECO:0007669"/>
    <property type="project" value="UniProtKB-UniRule"/>
</dbReference>
<dbReference type="GO" id="GO:0008753">
    <property type="term" value="F:NADPH dehydrogenase (quinone) activity"/>
    <property type="evidence" value="ECO:0007669"/>
    <property type="project" value="RHEA"/>
</dbReference>
<dbReference type="FunFam" id="3.40.50.360:FF:000004">
    <property type="entry name" value="NAD(P)H dehydrogenase (quinone)"/>
    <property type="match status" value="1"/>
</dbReference>
<dbReference type="Gene3D" id="3.40.50.360">
    <property type="match status" value="1"/>
</dbReference>
<dbReference type="HAMAP" id="MF_01017">
    <property type="entry name" value="NQOR"/>
    <property type="match status" value="1"/>
</dbReference>
<dbReference type="InterPro" id="IPR008254">
    <property type="entry name" value="Flavodoxin/NO_synth"/>
</dbReference>
<dbReference type="InterPro" id="IPR029039">
    <property type="entry name" value="Flavoprotein-like_sf"/>
</dbReference>
<dbReference type="InterPro" id="IPR010089">
    <property type="entry name" value="Flavoprotein_WrbA-like"/>
</dbReference>
<dbReference type="InterPro" id="IPR005025">
    <property type="entry name" value="FMN_Rdtase-like_dom"/>
</dbReference>
<dbReference type="InterPro" id="IPR037513">
    <property type="entry name" value="NQO"/>
</dbReference>
<dbReference type="NCBIfam" id="TIGR01755">
    <property type="entry name" value="flav_wrbA"/>
    <property type="match status" value="1"/>
</dbReference>
<dbReference type="NCBIfam" id="NF002999">
    <property type="entry name" value="PRK03767.1"/>
    <property type="match status" value="1"/>
</dbReference>
<dbReference type="PANTHER" id="PTHR30546">
    <property type="entry name" value="FLAVODOXIN-RELATED PROTEIN WRBA-RELATED"/>
    <property type="match status" value="1"/>
</dbReference>
<dbReference type="PANTHER" id="PTHR30546:SF23">
    <property type="entry name" value="FLAVOPROTEIN-LIKE PROTEIN YCP4-RELATED"/>
    <property type="match status" value="1"/>
</dbReference>
<dbReference type="Pfam" id="PF03358">
    <property type="entry name" value="FMN_red"/>
    <property type="match status" value="1"/>
</dbReference>
<dbReference type="SUPFAM" id="SSF52218">
    <property type="entry name" value="Flavoproteins"/>
    <property type="match status" value="1"/>
</dbReference>
<dbReference type="PROSITE" id="PS50902">
    <property type="entry name" value="FLAVODOXIN_LIKE"/>
    <property type="match status" value="1"/>
</dbReference>
<accession>B4T2V2</accession>
<comment type="catalytic activity">
    <reaction evidence="1">
        <text>a quinone + NADH + H(+) = a quinol + NAD(+)</text>
        <dbReference type="Rhea" id="RHEA:46160"/>
        <dbReference type="ChEBI" id="CHEBI:15378"/>
        <dbReference type="ChEBI" id="CHEBI:24646"/>
        <dbReference type="ChEBI" id="CHEBI:57540"/>
        <dbReference type="ChEBI" id="CHEBI:57945"/>
        <dbReference type="ChEBI" id="CHEBI:132124"/>
        <dbReference type="EC" id="1.6.5.2"/>
    </reaction>
</comment>
<comment type="catalytic activity">
    <reaction evidence="1">
        <text>a quinone + NADPH + H(+) = a quinol + NADP(+)</text>
        <dbReference type="Rhea" id="RHEA:46164"/>
        <dbReference type="ChEBI" id="CHEBI:15378"/>
        <dbReference type="ChEBI" id="CHEBI:24646"/>
        <dbReference type="ChEBI" id="CHEBI:57783"/>
        <dbReference type="ChEBI" id="CHEBI:58349"/>
        <dbReference type="ChEBI" id="CHEBI:132124"/>
        <dbReference type="EC" id="1.6.5.2"/>
    </reaction>
</comment>
<comment type="cofactor">
    <cofactor evidence="1">
        <name>FMN</name>
        <dbReference type="ChEBI" id="CHEBI:58210"/>
    </cofactor>
    <text evidence="1">Binds 1 FMN per monomer.</text>
</comment>
<comment type="similarity">
    <text evidence="1">Belongs to the WrbA family.</text>
</comment>
<sequence length="198" mass="20852">MAKILVLYYSMYGHIETMAHAVAEGAKKVDGAEVIIKRVPETMPPEIFAKAGGKTQNAPVATPQELADYDAIIFGTPTRFGNMSGQMRTFLDQTGGLWASGALYGKLGSVFSSTGTGGGQEQTITSTWTTLAHHGMVIVPIGYAAQELFDVSQVRGGTPYGATTIAGGDGSRQPSQEELSIARYQGEYVAGLAVKLNG</sequence>
<name>NQOR_SALNS</name>
<keyword id="KW-0285">Flavoprotein</keyword>
<keyword id="KW-0288">FMN</keyword>
<keyword id="KW-0520">NAD</keyword>
<keyword id="KW-0521">NADP</keyword>
<keyword id="KW-0547">Nucleotide-binding</keyword>
<keyword id="KW-0560">Oxidoreductase</keyword>
<protein>
    <recommendedName>
        <fullName evidence="1">NAD(P)H dehydrogenase (quinone)</fullName>
        <ecNumber evidence="1">1.6.5.2</ecNumber>
    </recommendedName>
    <alternativeName>
        <fullName>Flavoprotein WrbA</fullName>
    </alternativeName>
    <alternativeName>
        <fullName evidence="1">NAD(P)H:quinone oxidoreductase</fullName>
        <shortName evidence="1">NQO</shortName>
    </alternativeName>
</protein>
<reference key="1">
    <citation type="journal article" date="2011" name="J. Bacteriol.">
        <title>Comparative genomics of 28 Salmonella enterica isolates: evidence for CRISPR-mediated adaptive sublineage evolution.</title>
        <authorList>
            <person name="Fricke W.F."/>
            <person name="Mammel M.K."/>
            <person name="McDermott P.F."/>
            <person name="Tartera C."/>
            <person name="White D.G."/>
            <person name="Leclerc J.E."/>
            <person name="Ravel J."/>
            <person name="Cebula T.A."/>
        </authorList>
    </citation>
    <scope>NUCLEOTIDE SEQUENCE [LARGE SCALE GENOMIC DNA]</scope>
    <source>
        <strain>SL254</strain>
    </source>
</reference>
<evidence type="ECO:0000255" key="1">
    <source>
        <dbReference type="HAMAP-Rule" id="MF_01017"/>
    </source>
</evidence>
<gene>
    <name type="ordered locus">SNSL254_A1214</name>
</gene>